<proteinExistence type="predicted"/>
<keyword id="KW-1185">Reference proteome</keyword>
<keyword id="KW-0677">Repeat</keyword>
<keyword id="KW-0694">RNA-binding</keyword>
<name>Y443_METJA</name>
<protein>
    <recommendedName>
        <fullName>KH domain-containing protein MJ0443</fullName>
    </recommendedName>
</protein>
<reference key="1">
    <citation type="journal article" date="1996" name="Science">
        <title>Complete genome sequence of the methanogenic archaeon, Methanococcus jannaschii.</title>
        <authorList>
            <person name="Bult C.J."/>
            <person name="White O."/>
            <person name="Olsen G.J."/>
            <person name="Zhou L."/>
            <person name="Fleischmann R.D."/>
            <person name="Sutton G.G."/>
            <person name="Blake J.A."/>
            <person name="FitzGerald L.M."/>
            <person name="Clayton R.A."/>
            <person name="Gocayne J.D."/>
            <person name="Kerlavage A.R."/>
            <person name="Dougherty B.A."/>
            <person name="Tomb J.-F."/>
            <person name="Adams M.D."/>
            <person name="Reich C.I."/>
            <person name="Overbeek R."/>
            <person name="Kirkness E.F."/>
            <person name="Weinstock K.G."/>
            <person name="Merrick J.M."/>
            <person name="Glodek A."/>
            <person name="Scott J.L."/>
            <person name="Geoghagen N.S.M."/>
            <person name="Weidman J.F."/>
            <person name="Fuhrmann J.L."/>
            <person name="Nguyen D."/>
            <person name="Utterback T.R."/>
            <person name="Kelley J.M."/>
            <person name="Peterson J.D."/>
            <person name="Sadow P.W."/>
            <person name="Hanna M.C."/>
            <person name="Cotton M.D."/>
            <person name="Roberts K.M."/>
            <person name="Hurst M.A."/>
            <person name="Kaine B.P."/>
            <person name="Borodovsky M."/>
            <person name="Klenk H.-P."/>
            <person name="Fraser C.M."/>
            <person name="Smith H.O."/>
            <person name="Woese C.R."/>
            <person name="Venter J.C."/>
        </authorList>
    </citation>
    <scope>NUCLEOTIDE SEQUENCE [LARGE SCALE GENOMIC DNA]</scope>
    <source>
        <strain>ATCC 43067 / DSM 2661 / JAL-1 / JCM 10045 / NBRC 100440</strain>
    </source>
</reference>
<sequence>MVIIMVFGNIGQDKSIEILKIPKDRVGVLIGKKGNVKKTIEKELGVKLEIDADGTVTIYGTDKQKDPLAVWKARDIVRAIGRGFNPEIALKLVSDEYVLEVIDIEDYASSDNSIRRLKGRVIGKEGKSRRYIESLTGANVSVYGNTVAIVGEHEPVQIAKEAVEMLLRGASHAKTYKFLERERQKIKRARFELWKKKSDVDELYEKMNPNYEEIEIEEDEDEIEDEE</sequence>
<gene>
    <name type="ordered locus">MJ0443</name>
</gene>
<organism>
    <name type="scientific">Methanocaldococcus jannaschii (strain ATCC 43067 / DSM 2661 / JAL-1 / JCM 10045 / NBRC 100440)</name>
    <name type="common">Methanococcus jannaschii</name>
    <dbReference type="NCBI Taxonomy" id="243232"/>
    <lineage>
        <taxon>Archaea</taxon>
        <taxon>Methanobacteriati</taxon>
        <taxon>Methanobacteriota</taxon>
        <taxon>Methanomada group</taxon>
        <taxon>Methanococci</taxon>
        <taxon>Methanococcales</taxon>
        <taxon>Methanocaldococcaceae</taxon>
        <taxon>Methanocaldococcus</taxon>
    </lineage>
</organism>
<dbReference type="EMBL" id="L77117">
    <property type="protein sequence ID" value="AAB98430.1"/>
    <property type="molecule type" value="Genomic_DNA"/>
</dbReference>
<dbReference type="PIR" id="C64355">
    <property type="entry name" value="C64355"/>
</dbReference>
<dbReference type="SMR" id="Q57885"/>
<dbReference type="FunCoup" id="Q57885">
    <property type="interactions" value="93"/>
</dbReference>
<dbReference type="STRING" id="243232.MJ_0443"/>
<dbReference type="PaxDb" id="243232-MJ_0443"/>
<dbReference type="EnsemblBacteria" id="AAB98430">
    <property type="protein sequence ID" value="AAB98430"/>
    <property type="gene ID" value="MJ_0443"/>
</dbReference>
<dbReference type="KEGG" id="mja:MJ_0443"/>
<dbReference type="eggNOG" id="arCOG04150">
    <property type="taxonomic scope" value="Archaea"/>
</dbReference>
<dbReference type="HOGENOM" id="CLU_064992_3_0_2"/>
<dbReference type="InParanoid" id="Q57885"/>
<dbReference type="PhylomeDB" id="Q57885"/>
<dbReference type="Proteomes" id="UP000000805">
    <property type="component" value="Chromosome"/>
</dbReference>
<dbReference type="GO" id="GO:0003723">
    <property type="term" value="F:RNA binding"/>
    <property type="evidence" value="ECO:0007669"/>
    <property type="project" value="UniProtKB-KW"/>
</dbReference>
<dbReference type="CDD" id="cd22389">
    <property type="entry name" value="KH-I_Dim2p_like_rpt1"/>
    <property type="match status" value="1"/>
</dbReference>
<dbReference type="CDD" id="cd22390">
    <property type="entry name" value="KH-I_Dim2p_like_rpt2"/>
    <property type="match status" value="1"/>
</dbReference>
<dbReference type="FunFam" id="3.30.1370.10:FF:000076">
    <property type="entry name" value="KH domain protein"/>
    <property type="match status" value="1"/>
</dbReference>
<dbReference type="FunFam" id="3.30.1370.10:FF:000119">
    <property type="entry name" value="KH type 1 domain protein"/>
    <property type="match status" value="1"/>
</dbReference>
<dbReference type="Gene3D" id="3.30.1370.10">
    <property type="entry name" value="K Homology domain, type 1"/>
    <property type="match status" value="2"/>
</dbReference>
<dbReference type="InterPro" id="IPR004087">
    <property type="entry name" value="KH_dom"/>
</dbReference>
<dbReference type="InterPro" id="IPR004088">
    <property type="entry name" value="KH_dom_type_1"/>
</dbReference>
<dbReference type="InterPro" id="IPR036612">
    <property type="entry name" value="KH_dom_type_1_sf"/>
</dbReference>
<dbReference type="InterPro" id="IPR019964">
    <property type="entry name" value="KH_domain_protein_archaea"/>
</dbReference>
<dbReference type="InterPro" id="IPR048548">
    <property type="entry name" value="KRR1-like_KH2"/>
</dbReference>
<dbReference type="NCBIfam" id="TIGR03665">
    <property type="entry name" value="arCOG04150"/>
    <property type="match status" value="1"/>
</dbReference>
<dbReference type="NCBIfam" id="NF010327">
    <property type="entry name" value="PRK13763.1-2"/>
    <property type="match status" value="1"/>
</dbReference>
<dbReference type="PANTHER" id="PTHR12826">
    <property type="entry name" value="RIBONUCLEASE Y"/>
    <property type="match status" value="1"/>
</dbReference>
<dbReference type="PANTHER" id="PTHR12826:SF13">
    <property type="entry name" value="RNA-BINDING PROTEIN PNO1"/>
    <property type="match status" value="1"/>
</dbReference>
<dbReference type="Pfam" id="PF00013">
    <property type="entry name" value="KH_1"/>
    <property type="match status" value="1"/>
</dbReference>
<dbReference type="Pfam" id="PF21800">
    <property type="entry name" value="KH_KRR1_2nd"/>
    <property type="match status" value="1"/>
</dbReference>
<dbReference type="SMART" id="SM00322">
    <property type="entry name" value="KH"/>
    <property type="match status" value="2"/>
</dbReference>
<dbReference type="SUPFAM" id="SSF54791">
    <property type="entry name" value="Eukaryotic type KH-domain (KH-domain type I)"/>
    <property type="match status" value="2"/>
</dbReference>
<dbReference type="PROSITE" id="PS50084">
    <property type="entry name" value="KH_TYPE_1"/>
    <property type="match status" value="2"/>
</dbReference>
<accession>Q57885</accession>
<feature type="chain" id="PRO_0000050165" description="KH domain-containing protein MJ0443">
    <location>
        <begin position="1"/>
        <end position="227"/>
    </location>
</feature>
<feature type="domain" description="KH 1" evidence="1">
    <location>
        <begin position="14"/>
        <end position="77"/>
    </location>
</feature>
<feature type="domain" description="KH 2" evidence="1">
    <location>
        <begin position="106"/>
        <end position="163"/>
    </location>
</feature>
<evidence type="ECO:0000255" key="1">
    <source>
        <dbReference type="PROSITE-ProRule" id="PRU00117"/>
    </source>
</evidence>